<dbReference type="EC" id="2.7.7.6" evidence="1"/>
<dbReference type="EMBL" id="AP008957">
    <property type="protein sequence ID" value="BAH32442.1"/>
    <property type="molecule type" value="Genomic_DNA"/>
</dbReference>
<dbReference type="RefSeq" id="WP_019744304.1">
    <property type="nucleotide sequence ID" value="NC_012490.1"/>
</dbReference>
<dbReference type="SMR" id="C0ZVQ7"/>
<dbReference type="KEGG" id="rer:RER_17340"/>
<dbReference type="eggNOG" id="COG0086">
    <property type="taxonomic scope" value="Bacteria"/>
</dbReference>
<dbReference type="HOGENOM" id="CLU_000524_3_1_11"/>
<dbReference type="Proteomes" id="UP000002204">
    <property type="component" value="Chromosome"/>
</dbReference>
<dbReference type="GO" id="GO:0000428">
    <property type="term" value="C:DNA-directed RNA polymerase complex"/>
    <property type="evidence" value="ECO:0007669"/>
    <property type="project" value="UniProtKB-KW"/>
</dbReference>
<dbReference type="GO" id="GO:0003677">
    <property type="term" value="F:DNA binding"/>
    <property type="evidence" value="ECO:0007669"/>
    <property type="project" value="UniProtKB-UniRule"/>
</dbReference>
<dbReference type="GO" id="GO:0003899">
    <property type="term" value="F:DNA-directed RNA polymerase activity"/>
    <property type="evidence" value="ECO:0007669"/>
    <property type="project" value="UniProtKB-UniRule"/>
</dbReference>
<dbReference type="GO" id="GO:0000287">
    <property type="term" value="F:magnesium ion binding"/>
    <property type="evidence" value="ECO:0007669"/>
    <property type="project" value="UniProtKB-UniRule"/>
</dbReference>
<dbReference type="GO" id="GO:0008270">
    <property type="term" value="F:zinc ion binding"/>
    <property type="evidence" value="ECO:0007669"/>
    <property type="project" value="UniProtKB-UniRule"/>
</dbReference>
<dbReference type="GO" id="GO:0006351">
    <property type="term" value="P:DNA-templated transcription"/>
    <property type="evidence" value="ECO:0007669"/>
    <property type="project" value="UniProtKB-UniRule"/>
</dbReference>
<dbReference type="CDD" id="cd02655">
    <property type="entry name" value="RNAP_beta'_C"/>
    <property type="match status" value="1"/>
</dbReference>
<dbReference type="CDD" id="cd01609">
    <property type="entry name" value="RNAP_beta'_N"/>
    <property type="match status" value="1"/>
</dbReference>
<dbReference type="FunFam" id="1.10.150.390:FF:000002">
    <property type="entry name" value="DNA-directed RNA polymerase subunit beta"/>
    <property type="match status" value="1"/>
</dbReference>
<dbReference type="FunFam" id="1.10.40.90:FF:000001">
    <property type="entry name" value="DNA-directed RNA polymerase subunit beta"/>
    <property type="match status" value="1"/>
</dbReference>
<dbReference type="FunFam" id="4.10.860.120:FF:000001">
    <property type="entry name" value="DNA-directed RNA polymerase subunit beta"/>
    <property type="match status" value="1"/>
</dbReference>
<dbReference type="Gene3D" id="1.10.132.30">
    <property type="match status" value="1"/>
</dbReference>
<dbReference type="Gene3D" id="1.10.150.390">
    <property type="match status" value="1"/>
</dbReference>
<dbReference type="Gene3D" id="1.10.1790.20">
    <property type="match status" value="1"/>
</dbReference>
<dbReference type="Gene3D" id="1.10.40.90">
    <property type="match status" value="1"/>
</dbReference>
<dbReference type="Gene3D" id="2.40.40.20">
    <property type="match status" value="1"/>
</dbReference>
<dbReference type="Gene3D" id="2.40.50.100">
    <property type="match status" value="1"/>
</dbReference>
<dbReference type="Gene3D" id="4.10.860.120">
    <property type="entry name" value="RNA polymerase II, clamp domain"/>
    <property type="match status" value="1"/>
</dbReference>
<dbReference type="Gene3D" id="1.10.274.100">
    <property type="entry name" value="RNA polymerase Rpb1, domain 3"/>
    <property type="match status" value="1"/>
</dbReference>
<dbReference type="HAMAP" id="MF_01322">
    <property type="entry name" value="RNApol_bact_RpoC"/>
    <property type="match status" value="1"/>
</dbReference>
<dbReference type="InterPro" id="IPR045867">
    <property type="entry name" value="DNA-dir_RpoC_beta_prime"/>
</dbReference>
<dbReference type="InterPro" id="IPR012754">
    <property type="entry name" value="DNA-dir_RpoC_beta_prime_bact"/>
</dbReference>
<dbReference type="InterPro" id="IPR000722">
    <property type="entry name" value="RNA_pol_asu"/>
</dbReference>
<dbReference type="InterPro" id="IPR006592">
    <property type="entry name" value="RNA_pol_N"/>
</dbReference>
<dbReference type="InterPro" id="IPR007080">
    <property type="entry name" value="RNA_pol_Rpb1_1"/>
</dbReference>
<dbReference type="InterPro" id="IPR007066">
    <property type="entry name" value="RNA_pol_Rpb1_3"/>
</dbReference>
<dbReference type="InterPro" id="IPR042102">
    <property type="entry name" value="RNA_pol_Rpb1_3_sf"/>
</dbReference>
<dbReference type="InterPro" id="IPR007083">
    <property type="entry name" value="RNA_pol_Rpb1_4"/>
</dbReference>
<dbReference type="InterPro" id="IPR007081">
    <property type="entry name" value="RNA_pol_Rpb1_5"/>
</dbReference>
<dbReference type="InterPro" id="IPR044893">
    <property type="entry name" value="RNA_pol_Rpb1_clamp_domain"/>
</dbReference>
<dbReference type="InterPro" id="IPR038120">
    <property type="entry name" value="Rpb1_funnel_sf"/>
</dbReference>
<dbReference type="NCBIfam" id="NF011498">
    <property type="entry name" value="PRK14906.1"/>
    <property type="match status" value="1"/>
</dbReference>
<dbReference type="NCBIfam" id="TIGR02386">
    <property type="entry name" value="rpoC_TIGR"/>
    <property type="match status" value="1"/>
</dbReference>
<dbReference type="PANTHER" id="PTHR19376">
    <property type="entry name" value="DNA-DIRECTED RNA POLYMERASE"/>
    <property type="match status" value="1"/>
</dbReference>
<dbReference type="PANTHER" id="PTHR19376:SF54">
    <property type="entry name" value="DNA-DIRECTED RNA POLYMERASE SUBUNIT BETA"/>
    <property type="match status" value="1"/>
</dbReference>
<dbReference type="Pfam" id="PF04997">
    <property type="entry name" value="RNA_pol_Rpb1_1"/>
    <property type="match status" value="1"/>
</dbReference>
<dbReference type="Pfam" id="PF00623">
    <property type="entry name" value="RNA_pol_Rpb1_2"/>
    <property type="match status" value="1"/>
</dbReference>
<dbReference type="Pfam" id="PF04983">
    <property type="entry name" value="RNA_pol_Rpb1_3"/>
    <property type="match status" value="1"/>
</dbReference>
<dbReference type="Pfam" id="PF05000">
    <property type="entry name" value="RNA_pol_Rpb1_4"/>
    <property type="match status" value="1"/>
</dbReference>
<dbReference type="Pfam" id="PF04998">
    <property type="entry name" value="RNA_pol_Rpb1_5"/>
    <property type="match status" value="1"/>
</dbReference>
<dbReference type="SMART" id="SM00663">
    <property type="entry name" value="RPOLA_N"/>
    <property type="match status" value="1"/>
</dbReference>
<dbReference type="SUPFAM" id="SSF64484">
    <property type="entry name" value="beta and beta-prime subunits of DNA dependent RNA-polymerase"/>
    <property type="match status" value="1"/>
</dbReference>
<gene>
    <name evidence="1" type="primary">rpoC</name>
    <name type="ordered locus">RER_17340</name>
</gene>
<name>RPOC_RHOE4</name>
<organism>
    <name type="scientific">Rhodococcus erythropolis (strain PR4 / NBRC 100887)</name>
    <dbReference type="NCBI Taxonomy" id="234621"/>
    <lineage>
        <taxon>Bacteria</taxon>
        <taxon>Bacillati</taxon>
        <taxon>Actinomycetota</taxon>
        <taxon>Actinomycetes</taxon>
        <taxon>Mycobacteriales</taxon>
        <taxon>Nocardiaceae</taxon>
        <taxon>Rhodococcus</taxon>
        <taxon>Rhodococcus erythropolis group</taxon>
    </lineage>
</organism>
<reference key="1">
    <citation type="submission" date="2005-03" db="EMBL/GenBank/DDBJ databases">
        <title>Comparison of the complete genome sequences of Rhodococcus erythropolis PR4 and Rhodococcus opacus B4.</title>
        <authorList>
            <person name="Takarada H."/>
            <person name="Sekine M."/>
            <person name="Hosoyama A."/>
            <person name="Yamada R."/>
            <person name="Fujisawa T."/>
            <person name="Omata S."/>
            <person name="Shimizu A."/>
            <person name="Tsukatani N."/>
            <person name="Tanikawa S."/>
            <person name="Fujita N."/>
            <person name="Harayama S."/>
        </authorList>
    </citation>
    <scope>NUCLEOTIDE SEQUENCE [LARGE SCALE GENOMIC DNA]</scope>
    <source>
        <strain>PR4 / NBRC 100887</strain>
    </source>
</reference>
<comment type="function">
    <text evidence="1">DNA-dependent RNA polymerase catalyzes the transcription of DNA into RNA using the four ribonucleoside triphosphates as substrates.</text>
</comment>
<comment type="catalytic activity">
    <reaction evidence="1">
        <text>RNA(n) + a ribonucleoside 5'-triphosphate = RNA(n+1) + diphosphate</text>
        <dbReference type="Rhea" id="RHEA:21248"/>
        <dbReference type="Rhea" id="RHEA-COMP:14527"/>
        <dbReference type="Rhea" id="RHEA-COMP:17342"/>
        <dbReference type="ChEBI" id="CHEBI:33019"/>
        <dbReference type="ChEBI" id="CHEBI:61557"/>
        <dbReference type="ChEBI" id="CHEBI:140395"/>
        <dbReference type="EC" id="2.7.7.6"/>
    </reaction>
</comment>
<comment type="cofactor">
    <cofactor evidence="1">
        <name>Mg(2+)</name>
        <dbReference type="ChEBI" id="CHEBI:18420"/>
    </cofactor>
    <text evidence="1">Binds 1 Mg(2+) ion per subunit.</text>
</comment>
<comment type="cofactor">
    <cofactor evidence="1">
        <name>Zn(2+)</name>
        <dbReference type="ChEBI" id="CHEBI:29105"/>
    </cofactor>
    <text evidence="1">Binds 2 Zn(2+) ions per subunit.</text>
</comment>
<comment type="subunit">
    <text evidence="1">The RNAP catalytic core consists of 2 alpha, 1 beta, 1 beta' and 1 omega subunit. When a sigma factor is associated with the core the holoenzyme is formed, which can initiate transcription.</text>
</comment>
<comment type="similarity">
    <text evidence="1">Belongs to the RNA polymerase beta' chain family.</text>
</comment>
<proteinExistence type="inferred from homology"/>
<keyword id="KW-0240">DNA-directed RNA polymerase</keyword>
<keyword id="KW-0460">Magnesium</keyword>
<keyword id="KW-0479">Metal-binding</keyword>
<keyword id="KW-0548">Nucleotidyltransferase</keyword>
<keyword id="KW-0804">Transcription</keyword>
<keyword id="KW-0808">Transferase</keyword>
<keyword id="KW-0862">Zinc</keyword>
<sequence>MLDVNFFDELRIGLASAEDIRNWSYGEVKKPETINYRTLKPEKDGLFCEKIFGPTRDWECYCGKYKRVRFKGIICERCGVEVTRAKVRRERMGHIELAAPVTHIWYFKGVPSRLGYLLDLAPKDLEKIIYFAAYVIVGVDEELRHNELSTLEAEMQVEKKTVADQRDADLEARAQKLEADIAELEAEGAKSDVRRKVKDGGEREMRQLRDRAQRELDRLDEIWTTFTKLSVKQLIIDELLYRELVDRYGEYFTGAMGAESIQILMQNFDLDAEAESLRETIRSGKGQKKLRALKRLKVVAAFQTNGNSPMGMVLNAVPVIPPELRPMVQLDGGRFATSDLNDLYRRVINRNNRLKRLIDLGAPEIIVNNEKRMLQESVDALFDNGRRGRPVTGPGNRPLKSLSDLLKGKQGRFRQNLLGKRVDYSGRSVIVVGPQLKLHQCGLPKLMALELFKPFVMKRLVDLNHAQNIKSAKRMVERKRVQVWDVLEEVIAEHPVLLNRAPTLHRLGIQAFEPQLVEGKAIQLHPLVCEAFNADFDGDQMAVHLPLSAEAQAEARILMLSSNNILSPASGRPLAMPRLDMVTGLFHLTRLDEGVTGELVAPTNDEAEQGVYSSPAEAQMAVDRGALSVQAQIKVRLTQQRPPRDLENELFPEGWKYGDGWTATTTLGRVLFNELLPADYPFVNEQMPKKRQATIINDLAERYPMIVVAQTVDKLKDVGFYWATRSGVTVSISDVLVPPEKPAIIEDFEAQADKIEKQYQRGALDKKERNSALVTIWQEATDKVGKAMEAHFPDSNPIPMIVKSGAAGNMTQVRSLAGMKGLVTNPKGEFIPRPIKSSFKEGLTVLEYFINTHGARKGLADTALRTADSGYLTRRLVDVSQDVIVREVDCGTERGIVTTIAEKQADGTMIRDAHVETSTYARTLAADAVDANGTVIVERGHDLGDPAIDALLEAGITTVKVRSVLTCTTGTGVCATCYGRSMATGKLVDIGEAVGIVAAQSIGEPGTQLTMRTFHQGGVAGDDITGGLPRVQELFEARVPKGKAPIADVTGRVQLEDGDRFYKITIVPDDGGEEVVYDKLSKRQRLRVFKHADGRESLLADGDHVEVGQQLMEGAADPHEVLRVMGPRQVQIHLVNEVQEVYRSQGVSIHDKHIEVIVRQMLRRVTIIDSGATEFLPGSLTERAEFESANRRVVAEGGEPAAGRPVLMGITKASLATDSWLSAASFQETTRVLTDAAINCRSDKLIGLKENVIIGKLIPAGTGINRYRNIQVQPTEEARAAAYAVPSYDDQYYSPDGFGQNTGAAVPLDDYGFSNDYR</sequence>
<accession>C0ZVQ7</accession>
<protein>
    <recommendedName>
        <fullName evidence="1">DNA-directed RNA polymerase subunit beta'</fullName>
        <shortName evidence="1">RNAP subunit beta'</shortName>
        <ecNumber evidence="1">2.7.7.6</ecNumber>
    </recommendedName>
    <alternativeName>
        <fullName evidence="1">RNA polymerase subunit beta'</fullName>
    </alternativeName>
    <alternativeName>
        <fullName evidence="1">Transcriptase subunit beta'</fullName>
    </alternativeName>
</protein>
<feature type="chain" id="PRO_1000214497" description="DNA-directed RNA polymerase subunit beta'">
    <location>
        <begin position="1"/>
        <end position="1318"/>
    </location>
</feature>
<feature type="binding site" evidence="1">
    <location>
        <position position="60"/>
    </location>
    <ligand>
        <name>Zn(2+)</name>
        <dbReference type="ChEBI" id="CHEBI:29105"/>
        <label>1</label>
    </ligand>
</feature>
<feature type="binding site" evidence="1">
    <location>
        <position position="62"/>
    </location>
    <ligand>
        <name>Zn(2+)</name>
        <dbReference type="ChEBI" id="CHEBI:29105"/>
        <label>1</label>
    </ligand>
</feature>
<feature type="binding site" evidence="1">
    <location>
        <position position="75"/>
    </location>
    <ligand>
        <name>Zn(2+)</name>
        <dbReference type="ChEBI" id="CHEBI:29105"/>
        <label>1</label>
    </ligand>
</feature>
<feature type="binding site" evidence="1">
    <location>
        <position position="78"/>
    </location>
    <ligand>
        <name>Zn(2+)</name>
        <dbReference type="ChEBI" id="CHEBI:29105"/>
        <label>1</label>
    </ligand>
</feature>
<feature type="binding site" evidence="1">
    <location>
        <position position="535"/>
    </location>
    <ligand>
        <name>Mg(2+)</name>
        <dbReference type="ChEBI" id="CHEBI:18420"/>
    </ligand>
</feature>
<feature type="binding site" evidence="1">
    <location>
        <position position="537"/>
    </location>
    <ligand>
        <name>Mg(2+)</name>
        <dbReference type="ChEBI" id="CHEBI:18420"/>
    </ligand>
</feature>
<feature type="binding site" evidence="1">
    <location>
        <position position="539"/>
    </location>
    <ligand>
        <name>Mg(2+)</name>
        <dbReference type="ChEBI" id="CHEBI:18420"/>
    </ligand>
</feature>
<feature type="binding site" evidence="1">
    <location>
        <position position="890"/>
    </location>
    <ligand>
        <name>Zn(2+)</name>
        <dbReference type="ChEBI" id="CHEBI:29105"/>
        <label>2</label>
    </ligand>
</feature>
<feature type="binding site" evidence="1">
    <location>
        <position position="967"/>
    </location>
    <ligand>
        <name>Zn(2+)</name>
        <dbReference type="ChEBI" id="CHEBI:29105"/>
        <label>2</label>
    </ligand>
</feature>
<feature type="binding site" evidence="1">
    <location>
        <position position="974"/>
    </location>
    <ligand>
        <name>Zn(2+)</name>
        <dbReference type="ChEBI" id="CHEBI:29105"/>
        <label>2</label>
    </ligand>
</feature>
<feature type="binding site" evidence="1">
    <location>
        <position position="977"/>
    </location>
    <ligand>
        <name>Zn(2+)</name>
        <dbReference type="ChEBI" id="CHEBI:29105"/>
        <label>2</label>
    </ligand>
</feature>
<evidence type="ECO:0000255" key="1">
    <source>
        <dbReference type="HAMAP-Rule" id="MF_01322"/>
    </source>
</evidence>